<reference key="1">
    <citation type="journal article" date="1999" name="Virology">
        <title>The complete DNA sequence of myxoma virus.</title>
        <authorList>
            <person name="Cameron C."/>
            <person name="Hota-Mitchell S."/>
            <person name="Chen L."/>
            <person name="Barrett J.W."/>
            <person name="Cao J.-X."/>
            <person name="Macaulay C."/>
            <person name="Willer D.O."/>
            <person name="Evans D.H."/>
            <person name="McFadden G."/>
        </authorList>
    </citation>
    <scope>NUCLEOTIDE SEQUENCE [LARGE SCALE GENOMIC DNA]</scope>
</reference>
<sequence>MNPVTVFFVVVVTVAVCMILFQVYSIYLNYDNIKEFNAMHSPLEYSKMVNVTAIDRRVQDANDDIYDAKQKWRCVKFDDSYVSLSMFGYKADGVGIRRFRTLNGCIDYTFSTSTHSSILNPCIPPNDPKSRECTFLKSAL</sequence>
<organism>
    <name type="scientific">Myxoma virus (strain Lausanne)</name>
    <name type="common">MYXV</name>
    <dbReference type="NCBI Taxonomy" id="31530"/>
    <lineage>
        <taxon>Viruses</taxon>
        <taxon>Varidnaviria</taxon>
        <taxon>Bamfordvirae</taxon>
        <taxon>Nucleocytoviricota</taxon>
        <taxon>Pokkesviricetes</taxon>
        <taxon>Chitovirales</taxon>
        <taxon>Poxviridae</taxon>
        <taxon>Chordopoxvirinae</taxon>
        <taxon>Leporipoxvirus</taxon>
        <taxon>Myxoma virus</taxon>
    </lineage>
</organism>
<keyword id="KW-1015">Disulfide bond</keyword>
<keyword id="KW-1168">Fusion of virus membrane with host membrane</keyword>
<keyword id="KW-0426">Late protein</keyword>
<keyword id="KW-0472">Membrane</keyword>
<keyword id="KW-1185">Reference proteome</keyword>
<keyword id="KW-0735">Signal-anchor</keyword>
<keyword id="KW-0812">Transmembrane</keyword>
<keyword id="KW-1133">Transmembrane helix</keyword>
<keyword id="KW-0261">Viral envelope protein</keyword>
<keyword id="KW-1162">Viral penetration into host cytoplasm</keyword>
<keyword id="KW-0946">Virion</keyword>
<keyword id="KW-1160">Virus entry into host cell</keyword>
<protein>
    <recommendedName>
        <fullName>Envelope protein A28 homolog</fullName>
    </recommendedName>
    <alternativeName>
        <fullName>Protein M116</fullName>
    </alternativeName>
</protein>
<proteinExistence type="inferred from homology"/>
<accession>P68548</accession>
<accession>Q83657</accession>
<dbReference type="EMBL" id="AF170726">
    <property type="protein sequence ID" value="AAF15004.1"/>
    <property type="molecule type" value="Genomic_DNA"/>
</dbReference>
<dbReference type="RefSeq" id="NP_051830.1">
    <property type="nucleotide sequence ID" value="NC_001132.2"/>
</dbReference>
<dbReference type="SMR" id="P68548"/>
<dbReference type="GeneID" id="932155"/>
<dbReference type="KEGG" id="vg:932155"/>
<dbReference type="Proteomes" id="UP000000867">
    <property type="component" value="Segment"/>
</dbReference>
<dbReference type="GO" id="GO:0016020">
    <property type="term" value="C:membrane"/>
    <property type="evidence" value="ECO:0007669"/>
    <property type="project" value="UniProtKB-KW"/>
</dbReference>
<dbReference type="GO" id="GO:0019031">
    <property type="term" value="C:viral envelope"/>
    <property type="evidence" value="ECO:0007669"/>
    <property type="project" value="UniProtKB-KW"/>
</dbReference>
<dbReference type="GO" id="GO:0055036">
    <property type="term" value="C:virion membrane"/>
    <property type="evidence" value="ECO:0007669"/>
    <property type="project" value="UniProtKB-SubCell"/>
</dbReference>
<dbReference type="GO" id="GO:0039663">
    <property type="term" value="P:membrane fusion involved in viral entry into host cell"/>
    <property type="evidence" value="ECO:0007669"/>
    <property type="project" value="UniProtKB-KW"/>
</dbReference>
<dbReference type="GO" id="GO:0046718">
    <property type="term" value="P:symbiont entry into host cell"/>
    <property type="evidence" value="ECO:0007669"/>
    <property type="project" value="UniProtKB-KW"/>
</dbReference>
<dbReference type="InterPro" id="IPR007664">
    <property type="entry name" value="Poxvirus_A28"/>
</dbReference>
<dbReference type="Pfam" id="PF04584">
    <property type="entry name" value="Pox_A28"/>
    <property type="match status" value="1"/>
</dbReference>
<evidence type="ECO:0000250" key="1"/>
<evidence type="ECO:0000255" key="2"/>
<evidence type="ECO:0000305" key="3"/>
<organismHost>
    <name type="scientific">Oryctolagus cuniculus</name>
    <name type="common">Rabbit</name>
    <dbReference type="NCBI Taxonomy" id="9986"/>
</organismHost>
<gene>
    <name type="ordered locus">m116L</name>
</gene>
<name>A28_MYXVL</name>
<feature type="chain" id="PRO_0000099295" description="Envelope protein A28 homolog">
    <location>
        <begin position="1"/>
        <end position="140"/>
    </location>
</feature>
<feature type="transmembrane region" description="Helical; Signal-anchor for type II membrane protein" evidence="2">
    <location>
        <begin position="1"/>
        <end position="21"/>
    </location>
</feature>
<feature type="topological domain" description="Virion surface" evidence="2">
    <location>
        <begin position="22"/>
        <end position="140"/>
    </location>
</feature>
<comment type="function">
    <text evidence="1">Envelope protein required for virus entry into host cell and for cell-cell fusion (syncytium formation).</text>
</comment>
<comment type="subcellular location">
    <subcellularLocation>
        <location evidence="3">Virion membrane</location>
        <topology evidence="3">Single-pass type II membrane protein</topology>
    </subcellularLocation>
    <text evidence="1">Component of the intracellular mature virion (IMV) membrane.</text>
</comment>
<comment type="PTM">
    <text evidence="1">Contains two intramolecular disulfide bonds. They are created by the viral disulfide bond formation pathway, a poxvirus-specific pathway that operates on the cytoplasmic side of the MV membranes (By similarity).</text>
</comment>
<comment type="similarity">
    <text evidence="3">Belongs to the poxviridae A28 protein family.</text>
</comment>